<accession>P11416</accession>
<accession>P22603</accession>
<organism>
    <name type="scientific">Mus musculus</name>
    <name type="common">Mouse</name>
    <dbReference type="NCBI Taxonomy" id="10090"/>
    <lineage>
        <taxon>Eukaryota</taxon>
        <taxon>Metazoa</taxon>
        <taxon>Chordata</taxon>
        <taxon>Craniata</taxon>
        <taxon>Vertebrata</taxon>
        <taxon>Euteleostomi</taxon>
        <taxon>Mammalia</taxon>
        <taxon>Eutheria</taxon>
        <taxon>Euarchontoglires</taxon>
        <taxon>Glires</taxon>
        <taxon>Rodentia</taxon>
        <taxon>Myomorpha</taxon>
        <taxon>Muroidea</taxon>
        <taxon>Muridae</taxon>
        <taxon>Murinae</taxon>
        <taxon>Mus</taxon>
        <taxon>Mus</taxon>
    </lineage>
</organism>
<evidence type="ECO:0000250" key="1"/>
<evidence type="ECO:0000250" key="2">
    <source>
        <dbReference type="UniProtKB" id="P10276"/>
    </source>
</evidence>
<evidence type="ECO:0000255" key="3">
    <source>
        <dbReference type="PROSITE-ProRule" id="PRU00407"/>
    </source>
</evidence>
<evidence type="ECO:0000255" key="4">
    <source>
        <dbReference type="PROSITE-ProRule" id="PRU01189"/>
    </source>
</evidence>
<evidence type="ECO:0000256" key="5">
    <source>
        <dbReference type="SAM" id="MobiDB-lite"/>
    </source>
</evidence>
<evidence type="ECO:0000269" key="6">
    <source>
    </source>
</evidence>
<evidence type="ECO:0000269" key="7">
    <source>
    </source>
</evidence>
<evidence type="ECO:0000269" key="8">
    <source>
    </source>
</evidence>
<evidence type="ECO:0000269" key="9">
    <source>
    </source>
</evidence>
<evidence type="ECO:0000269" key="10">
    <source>
    </source>
</evidence>
<evidence type="ECO:0000269" key="11">
    <source>
    </source>
</evidence>
<evidence type="ECO:0000269" key="12">
    <source>
    </source>
</evidence>
<evidence type="ECO:0000269" key="13">
    <source>
    </source>
</evidence>
<evidence type="ECO:0000269" key="14">
    <source>
    </source>
</evidence>
<evidence type="ECO:0000269" key="15">
    <source>
    </source>
</evidence>
<evidence type="ECO:0000269" key="16">
    <source>
    </source>
</evidence>
<evidence type="ECO:0000303" key="17">
    <source>
    </source>
</evidence>
<evidence type="ECO:0000305" key="18"/>
<gene>
    <name type="primary">Rara</name>
    <name type="synonym">Nr1b1</name>
</gene>
<sequence>MASNSSSCPTPGGGHLNGYPVPPYAFFFPPMLGGLSPPGALTSLQHQLPVSGYSTPSPATIETQSSSSEEIVPSPPSPPPLPRIYKPCFVCQDKSSGYHYGVSACEGCKGFFRRSIQKNMVYTCHRDKNCIINKVTRNRCQYCRLQKCFDVGMSKESVRNDRNKKKKEAPKPECSESYTLTPEVGELIEKVRKAHQETFPALCQLGKYTTNNSSEQRVSLDIDLWDKFSELSTKCIIKTVEFAKQLPGFTTLTIADQITLLKAACLDILILRICTRYTPEQDTMTFSDGLTLNRTQMHNAGFGPLTDLVFAFANQLLPLEMDDAETGLLSAICLICGDRQDLEQPDKVDMLQEPLLEALKVYVRKRRPSRPHMFPKMLMKITDLRSISAKGAERVITLKMEIPGSMPPLIQEMLENSEGLDTLSGQSGGGTRDGGGLAPPPGSCSPSLSPSSHRSSPATQSP</sequence>
<name>RARA_MOUSE</name>
<proteinExistence type="evidence at protein level"/>
<keyword id="KW-0025">Alternative splicing</keyword>
<keyword id="KW-0963">Cytoplasm</keyword>
<keyword id="KW-0903">Direct protein sequencing</keyword>
<keyword id="KW-0238">DNA-binding</keyword>
<keyword id="KW-1017">Isopeptide bond</keyword>
<keyword id="KW-0479">Metal-binding</keyword>
<keyword id="KW-0488">Methylation</keyword>
<keyword id="KW-0539">Nucleus</keyword>
<keyword id="KW-0597">Phosphoprotein</keyword>
<keyword id="KW-0675">Receptor</keyword>
<keyword id="KW-1185">Reference proteome</keyword>
<keyword id="KW-0804">Transcription</keyword>
<keyword id="KW-0805">Transcription regulation</keyword>
<keyword id="KW-0832">Ubl conjugation</keyword>
<keyword id="KW-0862">Zinc</keyword>
<keyword id="KW-0863">Zinc-finger</keyword>
<dbReference type="EMBL" id="X56572">
    <property type="protein sequence ID" value="CAA39919.1"/>
    <property type="molecule type" value="mRNA"/>
</dbReference>
<dbReference type="EMBL" id="X56565">
    <property type="protein sequence ID" value="CAA39917.1"/>
    <property type="molecule type" value="mRNA"/>
</dbReference>
<dbReference type="EMBL" id="S56656">
    <property type="protein sequence ID" value="AAB25783.1"/>
    <property type="molecule type" value="mRNA"/>
</dbReference>
<dbReference type="EMBL" id="X57528">
    <property type="protein sequence ID" value="CAA40749.1"/>
    <property type="molecule type" value="mRNA"/>
</dbReference>
<dbReference type="EMBL" id="M60909">
    <property type="protein sequence ID" value="AAA40031.1"/>
    <property type="molecule type" value="mRNA"/>
</dbReference>
<dbReference type="EMBL" id="BC010216">
    <property type="protein sequence ID" value="AAH10216.1"/>
    <property type="molecule type" value="mRNA"/>
</dbReference>
<dbReference type="CCDS" id="CCDS36304.1">
    <molecule id="P11416-1"/>
</dbReference>
<dbReference type="CCDS" id="CCDS48905.1">
    <molecule id="P11416-2"/>
</dbReference>
<dbReference type="PIR" id="S05050">
    <property type="entry name" value="S05050"/>
</dbReference>
<dbReference type="RefSeq" id="NP_001169999.1">
    <molecule id="P11416-2"/>
    <property type="nucleotide sequence ID" value="NM_001176528.1"/>
</dbReference>
<dbReference type="RefSeq" id="NP_001170773.1">
    <molecule id="P11416-1"/>
    <property type="nucleotide sequence ID" value="NM_001177302.1"/>
</dbReference>
<dbReference type="RefSeq" id="NP_001170774.1">
    <molecule id="P11416-1"/>
    <property type="nucleotide sequence ID" value="NM_001177303.1"/>
</dbReference>
<dbReference type="RefSeq" id="NP_033050.2">
    <molecule id="P11416-1"/>
    <property type="nucleotide sequence ID" value="NM_009024.2"/>
</dbReference>
<dbReference type="RefSeq" id="XP_006532655.1">
    <molecule id="P11416-1"/>
    <property type="nucleotide sequence ID" value="XM_006532592.4"/>
</dbReference>
<dbReference type="RefSeq" id="XP_006532656.1">
    <molecule id="P11416-1"/>
    <property type="nucleotide sequence ID" value="XM_006532593.2"/>
</dbReference>
<dbReference type="RefSeq" id="XP_017169842.1">
    <property type="nucleotide sequence ID" value="XM_017314353.1"/>
</dbReference>
<dbReference type="RefSeq" id="XP_030101561.1">
    <molecule id="P11416-1"/>
    <property type="nucleotide sequence ID" value="XM_030245701.2"/>
</dbReference>
<dbReference type="SASBDB" id="P11416"/>
<dbReference type="SMR" id="P11416"/>
<dbReference type="BioGRID" id="202586">
    <property type="interactions" value="74"/>
</dbReference>
<dbReference type="ComplexPortal" id="CPX-584">
    <property type="entry name" value="RXRalpha-RARalpha retinoic acid receptor complex"/>
</dbReference>
<dbReference type="ComplexPortal" id="CPX-667">
    <property type="entry name" value="RARalpha-NCOA1 activated retinoic acid receptor complex"/>
</dbReference>
<dbReference type="ComplexPortal" id="CPX-668">
    <property type="entry name" value="RARalpha-NCOA2 activated retinoic acid receptor complex"/>
</dbReference>
<dbReference type="ComplexPortal" id="CPX-818">
    <property type="entry name" value="RXRalpha-RARalpha-NCOA2 retinoic acid receptor complex"/>
</dbReference>
<dbReference type="CORUM" id="P11416"/>
<dbReference type="DIP" id="DIP-31480N"/>
<dbReference type="FunCoup" id="P11416">
    <property type="interactions" value="1236"/>
</dbReference>
<dbReference type="IntAct" id="P11416">
    <property type="interactions" value="15"/>
</dbReference>
<dbReference type="MINT" id="P11416"/>
<dbReference type="STRING" id="10090.ENSMUSP00000069744"/>
<dbReference type="BindingDB" id="P11416"/>
<dbReference type="ChEMBL" id="CHEMBL2792"/>
<dbReference type="DrugCentral" id="P11416"/>
<dbReference type="GuidetoPHARMACOLOGY" id="590"/>
<dbReference type="GlyGen" id="P11416">
    <property type="glycosylation" value="2 sites"/>
</dbReference>
<dbReference type="iPTMnet" id="P11416"/>
<dbReference type="PhosphoSitePlus" id="P11416"/>
<dbReference type="PaxDb" id="10090-ENSMUSP00000069744"/>
<dbReference type="ProteomicsDB" id="300233">
    <molecule id="P11416-1"/>
</dbReference>
<dbReference type="ProteomicsDB" id="300234">
    <molecule id="P11416-2"/>
</dbReference>
<dbReference type="Antibodypedia" id="16473">
    <property type="antibodies" value="839 antibodies from 46 providers"/>
</dbReference>
<dbReference type="DNASU" id="19401"/>
<dbReference type="Ensembl" id="ENSMUST00000068133.10">
    <molecule id="P11416-1"/>
    <property type="protein sequence ID" value="ENSMUSP00000069744.4"/>
    <property type="gene ID" value="ENSMUSG00000037992.17"/>
</dbReference>
<dbReference type="Ensembl" id="ENSMUST00000107473.3">
    <molecule id="P11416-2"/>
    <property type="protein sequence ID" value="ENSMUSP00000103097.3"/>
    <property type="gene ID" value="ENSMUSG00000037992.17"/>
</dbReference>
<dbReference type="Ensembl" id="ENSMUST00000107474.8">
    <molecule id="P11416-1"/>
    <property type="protein sequence ID" value="ENSMUSP00000103098.2"/>
    <property type="gene ID" value="ENSMUSG00000037992.17"/>
</dbReference>
<dbReference type="Ensembl" id="ENSMUST00000107475.9">
    <molecule id="P11416-1"/>
    <property type="protein sequence ID" value="ENSMUSP00000103099.3"/>
    <property type="gene ID" value="ENSMUSG00000037992.17"/>
</dbReference>
<dbReference type="Ensembl" id="ENSMUST00000164748.8">
    <molecule id="P11416-1"/>
    <property type="protein sequence ID" value="ENSMUSP00000129791.2"/>
    <property type="gene ID" value="ENSMUSG00000037992.17"/>
</dbReference>
<dbReference type="GeneID" id="19401"/>
<dbReference type="KEGG" id="mmu:19401"/>
<dbReference type="UCSC" id="uc007lhx.1">
    <molecule id="P11416-1"/>
    <property type="organism name" value="mouse"/>
</dbReference>
<dbReference type="UCSC" id="uc007lhz.2">
    <molecule id="P11416-2"/>
    <property type="organism name" value="mouse"/>
</dbReference>
<dbReference type="AGR" id="MGI:97856"/>
<dbReference type="CTD" id="5914"/>
<dbReference type="MGI" id="MGI:97856">
    <property type="gene designation" value="Rara"/>
</dbReference>
<dbReference type="VEuPathDB" id="HostDB:ENSMUSG00000037992"/>
<dbReference type="eggNOG" id="KOG3575">
    <property type="taxonomic scope" value="Eukaryota"/>
</dbReference>
<dbReference type="GeneTree" id="ENSGT00940000159997"/>
<dbReference type="HOGENOM" id="CLU_007368_18_2_1"/>
<dbReference type="InParanoid" id="P11416"/>
<dbReference type="OMA" id="CHTRAPT"/>
<dbReference type="OrthoDB" id="6081310at2759"/>
<dbReference type="PhylomeDB" id="P11416"/>
<dbReference type="TreeFam" id="TF328382"/>
<dbReference type="Reactome" id="R-MMU-383280">
    <property type="pathway name" value="Nuclear Receptor transcription pathway"/>
</dbReference>
<dbReference type="Reactome" id="R-MMU-4090294">
    <property type="pathway name" value="SUMOylation of intracellular receptors"/>
</dbReference>
<dbReference type="Reactome" id="R-MMU-5362517">
    <property type="pathway name" value="Signaling by Retinoic Acid"/>
</dbReference>
<dbReference type="Reactome" id="R-MMU-9616222">
    <property type="pathway name" value="Transcriptional regulation of granulopoiesis"/>
</dbReference>
<dbReference type="BioGRID-ORCS" id="19401">
    <property type="hits" value="2 hits in 83 CRISPR screens"/>
</dbReference>
<dbReference type="ChiTaRS" id="Rara">
    <property type="organism name" value="mouse"/>
</dbReference>
<dbReference type="PRO" id="PR:P11416"/>
<dbReference type="Proteomes" id="UP000000589">
    <property type="component" value="Chromosome 11"/>
</dbReference>
<dbReference type="RNAct" id="P11416">
    <property type="molecule type" value="protein"/>
</dbReference>
<dbReference type="Bgee" id="ENSMUSG00000037992">
    <property type="expression patterns" value="Expressed in granulocyte and 204 other cell types or tissues"/>
</dbReference>
<dbReference type="ExpressionAtlas" id="P11416">
    <property type="expression patterns" value="baseline and differential"/>
</dbReference>
<dbReference type="GO" id="GO:0015629">
    <property type="term" value="C:actin cytoskeleton"/>
    <property type="evidence" value="ECO:0007669"/>
    <property type="project" value="Ensembl"/>
</dbReference>
<dbReference type="GO" id="GO:0000785">
    <property type="term" value="C:chromatin"/>
    <property type="evidence" value="ECO:0007669"/>
    <property type="project" value="Ensembl"/>
</dbReference>
<dbReference type="GO" id="GO:0005737">
    <property type="term" value="C:cytoplasm"/>
    <property type="evidence" value="ECO:0000314"/>
    <property type="project" value="MGI"/>
</dbReference>
<dbReference type="GO" id="GO:0005829">
    <property type="term" value="C:cytosol"/>
    <property type="evidence" value="ECO:0007669"/>
    <property type="project" value="Ensembl"/>
</dbReference>
<dbReference type="GO" id="GO:0030425">
    <property type="term" value="C:dendrite"/>
    <property type="evidence" value="ECO:0000314"/>
    <property type="project" value="MGI"/>
</dbReference>
<dbReference type="GO" id="GO:0043025">
    <property type="term" value="C:neuronal cell body"/>
    <property type="evidence" value="ECO:0000314"/>
    <property type="project" value="MGI"/>
</dbReference>
<dbReference type="GO" id="GO:0005730">
    <property type="term" value="C:nucleolus"/>
    <property type="evidence" value="ECO:0007669"/>
    <property type="project" value="Ensembl"/>
</dbReference>
<dbReference type="GO" id="GO:0005654">
    <property type="term" value="C:nucleoplasm"/>
    <property type="evidence" value="ECO:0000304"/>
    <property type="project" value="Reactome"/>
</dbReference>
<dbReference type="GO" id="GO:0005634">
    <property type="term" value="C:nucleus"/>
    <property type="evidence" value="ECO:0000314"/>
    <property type="project" value="UniProtKB"/>
</dbReference>
<dbReference type="GO" id="GO:0048471">
    <property type="term" value="C:perinuclear region of cytoplasm"/>
    <property type="evidence" value="ECO:0007669"/>
    <property type="project" value="Ensembl"/>
</dbReference>
<dbReference type="GO" id="GO:0005886">
    <property type="term" value="C:plasma membrane"/>
    <property type="evidence" value="ECO:0007669"/>
    <property type="project" value="Ensembl"/>
</dbReference>
<dbReference type="GO" id="GO:0090575">
    <property type="term" value="C:RNA polymerase II transcription regulator complex"/>
    <property type="evidence" value="ECO:0000266"/>
    <property type="project" value="ComplexPortal"/>
</dbReference>
<dbReference type="GO" id="GO:0005667">
    <property type="term" value="C:transcription regulator complex"/>
    <property type="evidence" value="ECO:0000353"/>
    <property type="project" value="ComplexPortal"/>
</dbReference>
<dbReference type="GO" id="GO:0051393">
    <property type="term" value="F:alpha-actinin binding"/>
    <property type="evidence" value="ECO:0007669"/>
    <property type="project" value="Ensembl"/>
</dbReference>
<dbReference type="GO" id="GO:0031490">
    <property type="term" value="F:chromatin DNA binding"/>
    <property type="evidence" value="ECO:0007669"/>
    <property type="project" value="Ensembl"/>
</dbReference>
<dbReference type="GO" id="GO:0003677">
    <property type="term" value="F:DNA binding"/>
    <property type="evidence" value="ECO:0000314"/>
    <property type="project" value="MGI"/>
</dbReference>
<dbReference type="GO" id="GO:0003700">
    <property type="term" value="F:DNA-binding transcription factor activity"/>
    <property type="evidence" value="ECO:0000314"/>
    <property type="project" value="MGI"/>
</dbReference>
<dbReference type="GO" id="GO:0001217">
    <property type="term" value="F:DNA-binding transcription repressor activity"/>
    <property type="evidence" value="ECO:0007669"/>
    <property type="project" value="Ensembl"/>
</dbReference>
<dbReference type="GO" id="GO:1901363">
    <property type="term" value="F:heterocyclic compound binding"/>
    <property type="evidence" value="ECO:0007669"/>
    <property type="project" value="Ensembl"/>
</dbReference>
<dbReference type="GO" id="GO:0042826">
    <property type="term" value="F:histone deacetylase binding"/>
    <property type="evidence" value="ECO:0007669"/>
    <property type="project" value="Ensembl"/>
</dbReference>
<dbReference type="GO" id="GO:0048027">
    <property type="term" value="F:mRNA 5'-UTR binding"/>
    <property type="evidence" value="ECO:0007669"/>
    <property type="project" value="Ensembl"/>
</dbReference>
<dbReference type="GO" id="GO:0000900">
    <property type="term" value="F:mRNA regulatory element binding translation repressor activity"/>
    <property type="evidence" value="ECO:0007669"/>
    <property type="project" value="Ensembl"/>
</dbReference>
<dbReference type="GO" id="GO:0004879">
    <property type="term" value="F:nuclear receptor activity"/>
    <property type="evidence" value="ECO:0000314"/>
    <property type="project" value="MGI"/>
</dbReference>
<dbReference type="GO" id="GO:0019904">
    <property type="term" value="F:protein domain specific binding"/>
    <property type="evidence" value="ECO:0007669"/>
    <property type="project" value="Ensembl"/>
</dbReference>
<dbReference type="GO" id="GO:0051018">
    <property type="term" value="F:protein kinase A binding"/>
    <property type="evidence" value="ECO:0007669"/>
    <property type="project" value="Ensembl"/>
</dbReference>
<dbReference type="GO" id="GO:0043422">
    <property type="term" value="F:protein kinase B binding"/>
    <property type="evidence" value="ECO:0007669"/>
    <property type="project" value="Ensembl"/>
</dbReference>
<dbReference type="GO" id="GO:0001972">
    <property type="term" value="F:retinoic acid binding"/>
    <property type="evidence" value="ECO:0007669"/>
    <property type="project" value="Ensembl"/>
</dbReference>
<dbReference type="GO" id="GO:0044323">
    <property type="term" value="F:retinoic acid-responsive element binding"/>
    <property type="evidence" value="ECO:0007669"/>
    <property type="project" value="Ensembl"/>
</dbReference>
<dbReference type="GO" id="GO:0000977">
    <property type="term" value="F:RNA polymerase II transcription regulatory region sequence-specific DNA binding"/>
    <property type="evidence" value="ECO:0000314"/>
    <property type="project" value="MGI"/>
</dbReference>
<dbReference type="GO" id="GO:0043565">
    <property type="term" value="F:sequence-specific DNA binding"/>
    <property type="evidence" value="ECO:0000314"/>
    <property type="project" value="MGI"/>
</dbReference>
<dbReference type="GO" id="GO:0005102">
    <property type="term" value="F:signaling receptor binding"/>
    <property type="evidence" value="ECO:0007669"/>
    <property type="project" value="Ensembl"/>
</dbReference>
<dbReference type="GO" id="GO:0000976">
    <property type="term" value="F:transcription cis-regulatory region binding"/>
    <property type="evidence" value="ECO:0000314"/>
    <property type="project" value="MGI"/>
</dbReference>
<dbReference type="GO" id="GO:0001223">
    <property type="term" value="F:transcription coactivator binding"/>
    <property type="evidence" value="ECO:0000353"/>
    <property type="project" value="UniProtKB"/>
</dbReference>
<dbReference type="GO" id="GO:0008270">
    <property type="term" value="F:zinc ion binding"/>
    <property type="evidence" value="ECO:0007669"/>
    <property type="project" value="UniProtKB-KW"/>
</dbReference>
<dbReference type="GO" id="GO:0043277">
    <property type="term" value="P:apoptotic cell clearance"/>
    <property type="evidence" value="ECO:0007669"/>
    <property type="project" value="Ensembl"/>
</dbReference>
<dbReference type="GO" id="GO:0060348">
    <property type="term" value="P:bone development"/>
    <property type="evidence" value="ECO:0000316"/>
    <property type="project" value="MGI"/>
</dbReference>
<dbReference type="GO" id="GO:0071391">
    <property type="term" value="P:cellular response to estrogen stimulus"/>
    <property type="evidence" value="ECO:0007669"/>
    <property type="project" value="Ensembl"/>
</dbReference>
<dbReference type="GO" id="GO:0071222">
    <property type="term" value="P:cellular response to lipopolysaccharide"/>
    <property type="evidence" value="ECO:0000314"/>
    <property type="project" value="UniProtKB"/>
</dbReference>
<dbReference type="GO" id="GO:0071300">
    <property type="term" value="P:cellular response to retinoic acid"/>
    <property type="evidence" value="ECO:0007669"/>
    <property type="project" value="Ensembl"/>
</dbReference>
<dbReference type="GO" id="GO:0060591">
    <property type="term" value="P:chondroblast differentiation"/>
    <property type="evidence" value="ECO:0000315"/>
    <property type="project" value="MGI"/>
</dbReference>
<dbReference type="GO" id="GO:0031076">
    <property type="term" value="P:embryonic camera-type eye development"/>
    <property type="evidence" value="ECO:0000316"/>
    <property type="project" value="MGI"/>
</dbReference>
<dbReference type="GO" id="GO:0060324">
    <property type="term" value="P:face development"/>
    <property type="evidence" value="ECO:0000316"/>
    <property type="project" value="MGI"/>
</dbReference>
<dbReference type="GO" id="GO:0007565">
    <property type="term" value="P:female pregnancy"/>
    <property type="evidence" value="ECO:0007669"/>
    <property type="project" value="Ensembl"/>
</dbReference>
<dbReference type="GO" id="GO:0007281">
    <property type="term" value="P:germ cell development"/>
    <property type="evidence" value="ECO:0000315"/>
    <property type="project" value="UniProtKB"/>
</dbReference>
<dbReference type="GO" id="GO:0002068">
    <property type="term" value="P:glandular epithelial cell development"/>
    <property type="evidence" value="ECO:0000316"/>
    <property type="project" value="MGI"/>
</dbReference>
<dbReference type="GO" id="GO:0003417">
    <property type="term" value="P:growth plate cartilage development"/>
    <property type="evidence" value="ECO:0000316"/>
    <property type="project" value="MGI"/>
</dbReference>
<dbReference type="GO" id="GO:0021766">
    <property type="term" value="P:hippocampus development"/>
    <property type="evidence" value="ECO:0007669"/>
    <property type="project" value="Ensembl"/>
</dbReference>
<dbReference type="GO" id="GO:0060173">
    <property type="term" value="P:limb development"/>
    <property type="evidence" value="ECO:0000316"/>
    <property type="project" value="MGI"/>
</dbReference>
<dbReference type="GO" id="GO:0001889">
    <property type="term" value="P:liver development"/>
    <property type="evidence" value="ECO:0007669"/>
    <property type="project" value="Ensembl"/>
</dbReference>
<dbReference type="GO" id="GO:0042789">
    <property type="term" value="P:mRNA transcription by RNA polymerase II"/>
    <property type="evidence" value="ECO:0000266"/>
    <property type="project" value="ComplexPortal"/>
</dbReference>
<dbReference type="GO" id="GO:0035264">
    <property type="term" value="P:multicellular organism growth"/>
    <property type="evidence" value="ECO:0000316"/>
    <property type="project" value="MGI"/>
</dbReference>
<dbReference type="GO" id="GO:0043066">
    <property type="term" value="P:negative regulation of apoptotic process"/>
    <property type="evidence" value="ECO:0000316"/>
    <property type="project" value="MGI"/>
</dbReference>
<dbReference type="GO" id="GO:0061037">
    <property type="term" value="P:negative regulation of cartilage development"/>
    <property type="evidence" value="ECO:0000315"/>
    <property type="project" value="MGI"/>
</dbReference>
<dbReference type="GO" id="GO:0045596">
    <property type="term" value="P:negative regulation of cell differentiation"/>
    <property type="evidence" value="ECO:0000315"/>
    <property type="project" value="MGI"/>
</dbReference>
<dbReference type="GO" id="GO:0008285">
    <property type="term" value="P:negative regulation of cell population proliferation"/>
    <property type="evidence" value="ECO:0007669"/>
    <property type="project" value="Ensembl"/>
</dbReference>
<dbReference type="GO" id="GO:0045892">
    <property type="term" value="P:negative regulation of DNA-templated transcription"/>
    <property type="evidence" value="ECO:0000314"/>
    <property type="project" value="MGI"/>
</dbReference>
<dbReference type="GO" id="GO:0010629">
    <property type="term" value="P:negative regulation of gene expression"/>
    <property type="evidence" value="ECO:0000316"/>
    <property type="project" value="MGI"/>
</dbReference>
<dbReference type="GO" id="GO:0030853">
    <property type="term" value="P:negative regulation of granulocyte differentiation"/>
    <property type="evidence" value="ECO:0007669"/>
    <property type="project" value="Ensembl"/>
</dbReference>
<dbReference type="GO" id="GO:1902894">
    <property type="term" value="P:negative regulation of miRNA transcription"/>
    <property type="evidence" value="ECO:0007669"/>
    <property type="project" value="Ensembl"/>
</dbReference>
<dbReference type="GO" id="GO:0000122">
    <property type="term" value="P:negative regulation of transcription by RNA polymerase II"/>
    <property type="evidence" value="ECO:0000314"/>
    <property type="project" value="MGI"/>
</dbReference>
<dbReference type="GO" id="GO:0045947">
    <property type="term" value="P:negative regulation of translational initiation"/>
    <property type="evidence" value="ECO:0000314"/>
    <property type="project" value="MGI"/>
</dbReference>
<dbReference type="GO" id="GO:0032720">
    <property type="term" value="P:negative regulation of tumor necrosis factor production"/>
    <property type="evidence" value="ECO:0007669"/>
    <property type="project" value="Ensembl"/>
</dbReference>
<dbReference type="GO" id="GO:0032689">
    <property type="term" value="P:negative regulation of type II interferon production"/>
    <property type="evidence" value="ECO:0007669"/>
    <property type="project" value="Ensembl"/>
</dbReference>
<dbReference type="GO" id="GO:0001843">
    <property type="term" value="P:neural tube closure"/>
    <property type="evidence" value="ECO:0000316"/>
    <property type="project" value="MGI"/>
</dbReference>
<dbReference type="GO" id="GO:0003148">
    <property type="term" value="P:outflow tract septum morphogenesis"/>
    <property type="evidence" value="ECO:0000316"/>
    <property type="project" value="MGI"/>
</dbReference>
<dbReference type="GO" id="GO:0045787">
    <property type="term" value="P:positive regulation of cell cycle"/>
    <property type="evidence" value="ECO:0007669"/>
    <property type="project" value="Ensembl"/>
</dbReference>
<dbReference type="GO" id="GO:0008284">
    <property type="term" value="P:positive regulation of cell population proliferation"/>
    <property type="evidence" value="ECO:0000316"/>
    <property type="project" value="MGI"/>
</dbReference>
<dbReference type="GO" id="GO:0010628">
    <property type="term" value="P:positive regulation of gene expression"/>
    <property type="evidence" value="ECO:0000315"/>
    <property type="project" value="UniProtKB"/>
</dbReference>
<dbReference type="GO" id="GO:0032736">
    <property type="term" value="P:positive regulation of interleukin-13 production"/>
    <property type="evidence" value="ECO:0007669"/>
    <property type="project" value="Ensembl"/>
</dbReference>
<dbReference type="GO" id="GO:0032753">
    <property type="term" value="P:positive regulation of interleukin-4 production"/>
    <property type="evidence" value="ECO:0007669"/>
    <property type="project" value="Ensembl"/>
</dbReference>
<dbReference type="GO" id="GO:0032754">
    <property type="term" value="P:positive regulation of interleukin-5 production"/>
    <property type="evidence" value="ECO:0007669"/>
    <property type="project" value="Ensembl"/>
</dbReference>
<dbReference type="GO" id="GO:0045666">
    <property type="term" value="P:positive regulation of neuron differentiation"/>
    <property type="evidence" value="ECO:0007669"/>
    <property type="project" value="Ensembl"/>
</dbReference>
<dbReference type="GO" id="GO:0045630">
    <property type="term" value="P:positive regulation of T-helper 2 cell differentiation"/>
    <property type="evidence" value="ECO:0007669"/>
    <property type="project" value="Ensembl"/>
</dbReference>
<dbReference type="GO" id="GO:0045944">
    <property type="term" value="P:positive regulation of transcription by RNA polymerase II"/>
    <property type="evidence" value="ECO:0000314"/>
    <property type="project" value="MGI"/>
</dbReference>
<dbReference type="GO" id="GO:0030850">
    <property type="term" value="P:prostate gland development"/>
    <property type="evidence" value="ECO:0007669"/>
    <property type="project" value="Ensembl"/>
</dbReference>
<dbReference type="GO" id="GO:0006355">
    <property type="term" value="P:regulation of DNA-templated transcription"/>
    <property type="evidence" value="ECO:0000314"/>
    <property type="project" value="MGI"/>
</dbReference>
<dbReference type="GO" id="GO:0030852">
    <property type="term" value="P:regulation of granulocyte differentiation"/>
    <property type="evidence" value="ECO:0000315"/>
    <property type="project" value="MGI"/>
</dbReference>
<dbReference type="GO" id="GO:1901532">
    <property type="term" value="P:regulation of hematopoietic progenitor cell differentiation"/>
    <property type="evidence" value="ECO:0000315"/>
    <property type="project" value="MGI"/>
</dbReference>
<dbReference type="GO" id="GO:0031641">
    <property type="term" value="P:regulation of myelination"/>
    <property type="evidence" value="ECO:0007669"/>
    <property type="project" value="Ensembl"/>
</dbReference>
<dbReference type="GO" id="GO:0048167">
    <property type="term" value="P:regulation of synaptic plasticity"/>
    <property type="evidence" value="ECO:0007669"/>
    <property type="project" value="Ensembl"/>
</dbReference>
<dbReference type="GO" id="GO:0034097">
    <property type="term" value="P:response to cytokine"/>
    <property type="evidence" value="ECO:0007669"/>
    <property type="project" value="Ensembl"/>
</dbReference>
<dbReference type="GO" id="GO:0032355">
    <property type="term" value="P:response to estradiol"/>
    <property type="evidence" value="ECO:0007669"/>
    <property type="project" value="Ensembl"/>
</dbReference>
<dbReference type="GO" id="GO:0045471">
    <property type="term" value="P:response to ethanol"/>
    <property type="evidence" value="ECO:0007669"/>
    <property type="project" value="Ensembl"/>
</dbReference>
<dbReference type="GO" id="GO:0032526">
    <property type="term" value="P:response to retinoic acid"/>
    <property type="evidence" value="ECO:0000315"/>
    <property type="project" value="MGI"/>
</dbReference>
<dbReference type="GO" id="GO:0033189">
    <property type="term" value="P:response to vitamin A"/>
    <property type="evidence" value="ECO:0007669"/>
    <property type="project" value="Ensembl"/>
</dbReference>
<dbReference type="GO" id="GO:0048384">
    <property type="term" value="P:retinoic acid receptor signaling pathway"/>
    <property type="evidence" value="ECO:0007669"/>
    <property type="project" value="Ensembl"/>
</dbReference>
<dbReference type="GO" id="GO:0060010">
    <property type="term" value="P:Sertoli cell fate commitment"/>
    <property type="evidence" value="ECO:0000315"/>
    <property type="project" value="UniProtKB"/>
</dbReference>
<dbReference type="GO" id="GO:0007283">
    <property type="term" value="P:spermatogenesis"/>
    <property type="evidence" value="ECO:0000315"/>
    <property type="project" value="MGI"/>
</dbReference>
<dbReference type="GO" id="GO:0060534">
    <property type="term" value="P:trachea cartilage development"/>
    <property type="evidence" value="ECO:0000315"/>
    <property type="project" value="MGI"/>
</dbReference>
<dbReference type="GO" id="GO:0001657">
    <property type="term" value="P:ureteric bud development"/>
    <property type="evidence" value="ECO:0000315"/>
    <property type="project" value="MGI"/>
</dbReference>
<dbReference type="GO" id="GO:0055012">
    <property type="term" value="P:ventricular cardiac muscle cell differentiation"/>
    <property type="evidence" value="ECO:0000315"/>
    <property type="project" value="MGI"/>
</dbReference>
<dbReference type="CDD" id="cd06964">
    <property type="entry name" value="NR_DBD_RAR"/>
    <property type="match status" value="1"/>
</dbReference>
<dbReference type="CDD" id="cd06937">
    <property type="entry name" value="NR_LBD_RAR"/>
    <property type="match status" value="1"/>
</dbReference>
<dbReference type="FunFam" id="1.10.565.10:FF:000073">
    <property type="entry name" value="Retinoic acid receptor beta"/>
    <property type="match status" value="1"/>
</dbReference>
<dbReference type="FunFam" id="3.30.50.10:FF:000004">
    <property type="entry name" value="Retinoic acid receptor beta isoform"/>
    <property type="match status" value="1"/>
</dbReference>
<dbReference type="Gene3D" id="3.30.50.10">
    <property type="entry name" value="Erythroid Transcription Factor GATA-1, subunit A"/>
    <property type="match status" value="1"/>
</dbReference>
<dbReference type="Gene3D" id="1.10.565.10">
    <property type="entry name" value="Retinoid X Receptor"/>
    <property type="match status" value="1"/>
</dbReference>
<dbReference type="InterPro" id="IPR035500">
    <property type="entry name" value="NHR-like_dom_sf"/>
</dbReference>
<dbReference type="InterPro" id="IPR047159">
    <property type="entry name" value="NR_DBD_RAR"/>
</dbReference>
<dbReference type="InterPro" id="IPR047158">
    <property type="entry name" value="NR_LBD_RAR"/>
</dbReference>
<dbReference type="InterPro" id="IPR000536">
    <property type="entry name" value="Nucl_hrmn_rcpt_lig-bd"/>
</dbReference>
<dbReference type="InterPro" id="IPR001723">
    <property type="entry name" value="Nuclear_hrmn_rcpt"/>
</dbReference>
<dbReference type="InterPro" id="IPR003078">
    <property type="entry name" value="Retinoic_acid_rcpt"/>
</dbReference>
<dbReference type="InterPro" id="IPR001628">
    <property type="entry name" value="Znf_hrmn_rcpt"/>
</dbReference>
<dbReference type="InterPro" id="IPR013088">
    <property type="entry name" value="Znf_NHR/GATA"/>
</dbReference>
<dbReference type="PANTHER" id="PTHR24085">
    <property type="entry name" value="NUCLEAR HORMONE RECEPTOR"/>
    <property type="match status" value="1"/>
</dbReference>
<dbReference type="PANTHER" id="PTHR24085:SF8">
    <property type="entry name" value="RETINOIC ACID RECEPTOR ALPHA"/>
    <property type="match status" value="1"/>
</dbReference>
<dbReference type="Pfam" id="PF00104">
    <property type="entry name" value="Hormone_recep"/>
    <property type="match status" value="1"/>
</dbReference>
<dbReference type="Pfam" id="PF00105">
    <property type="entry name" value="zf-C4"/>
    <property type="match status" value="1"/>
</dbReference>
<dbReference type="PRINTS" id="PR01292">
    <property type="entry name" value="RETNOICACIDR"/>
</dbReference>
<dbReference type="PRINTS" id="PR00398">
    <property type="entry name" value="STRDHORMONER"/>
</dbReference>
<dbReference type="PRINTS" id="PR00047">
    <property type="entry name" value="STROIDFINGER"/>
</dbReference>
<dbReference type="SMART" id="SM00430">
    <property type="entry name" value="HOLI"/>
    <property type="match status" value="1"/>
</dbReference>
<dbReference type="SMART" id="SM00399">
    <property type="entry name" value="ZnF_C4"/>
    <property type="match status" value="1"/>
</dbReference>
<dbReference type="SUPFAM" id="SSF57716">
    <property type="entry name" value="Glucocorticoid receptor-like (DNA-binding domain)"/>
    <property type="match status" value="1"/>
</dbReference>
<dbReference type="SUPFAM" id="SSF48508">
    <property type="entry name" value="Nuclear receptor ligand-binding domain"/>
    <property type="match status" value="1"/>
</dbReference>
<dbReference type="PROSITE" id="PS51843">
    <property type="entry name" value="NR_LBD"/>
    <property type="match status" value="1"/>
</dbReference>
<dbReference type="PROSITE" id="PS00031">
    <property type="entry name" value="NUCLEAR_REC_DBD_1"/>
    <property type="match status" value="1"/>
</dbReference>
<dbReference type="PROSITE" id="PS51030">
    <property type="entry name" value="NUCLEAR_REC_DBD_2"/>
    <property type="match status" value="1"/>
</dbReference>
<reference key="1">
    <citation type="journal article" date="1989" name="Nature">
        <title>Cloning of murine alpha and beta retinoic acid receptors and a novel receptor gamma predominantly expressed in skin.</title>
        <authorList>
            <person name="Zelent A."/>
            <person name="Krust A."/>
            <person name="Petkovich M."/>
            <person name="Kastner P."/>
            <person name="Chambon P."/>
        </authorList>
    </citation>
    <scope>NUCLEOTIDE SEQUENCE [MRNA] (ISOFORM ALPHA-1)</scope>
</reference>
<reference key="2">
    <citation type="journal article" date="1993" name="J. Recept. Res.">
        <title>Cloning of several genes coding for retinoic acid nuclear receptors in the mouse embryonal carcinoma cell line PCC7-MZ1.</title>
        <authorList>
            <person name="Heiermann R."/>
            <person name="Rentrop M."/>
            <person name="Lang E."/>
            <person name="Maelicke A."/>
        </authorList>
    </citation>
    <scope>NUCLEOTIDE SEQUENCE [MRNA] (ISOFORM ALPHA-1)</scope>
</reference>
<reference key="3">
    <citation type="journal article" date="1991" name="EMBO J.">
        <title>Multiple isoforms of the mouse retinoic acid receptor alpha are generated by alternative splicing and differential induction by retinoic acid.</title>
        <authorList>
            <person name="Leroy P."/>
            <person name="Krust A."/>
            <person name="Zelent A."/>
            <person name="Mendelsohn C."/>
            <person name="Garnier J.-M."/>
            <person name="Kastner P."/>
            <person name="Dierich A."/>
            <person name="Chambon P."/>
        </authorList>
    </citation>
    <scope>NUCLEOTIDE SEQUENCE [MRNA] (ISOFORMS ALPHA-1 AND ALPHA-2)</scope>
</reference>
<reference key="4">
    <citation type="journal article" date="1992" name="Differentiation">
        <title>Retinoic acid resistance of the variant embryonal carcinoma cell line RAC65 is caused by expression of a truncated RAR alpha.</title>
        <authorList>
            <person name="Kruyt F.A.E."/>
            <person name="van der Veer L."/>
            <person name="Mader S."/>
            <person name="van den Brink C.E."/>
            <person name="Feijen A."/>
            <person name="Jonk L.J."/>
            <person name="Kruijer W."/>
            <person name="van der Saag P.T."/>
        </authorList>
    </citation>
    <scope>NUCLEOTIDE SEQUENCE [MRNA] (VARIANT IN EMBRYONAL CARCINOMA CELL LINE RAC65)</scope>
</reference>
<reference key="5">
    <citation type="journal article" date="1990" name="Mol. Cell. Biol.">
        <title>A dominant negative mutation of the alpha retinoic acid receptor gene in a retinoic acid-nonresponsive embryonal carcinoma cell.</title>
        <authorList>
            <person name="Pratt M.A.C."/>
            <person name="Kralova J."/>
            <person name="McBurney M.W."/>
        </authorList>
    </citation>
    <scope>NUCLEOTIDE SEQUENCE [MRNA] (VARIANT IN EMBRYONAL CARCINOMA CELL LINE RAC65)</scope>
</reference>
<reference key="6">
    <citation type="journal article" date="2004" name="Genome Res.">
        <title>The status, quality, and expansion of the NIH full-length cDNA project: the Mammalian Gene Collection (MGC).</title>
        <authorList>
            <consortium name="The MGC Project Team"/>
        </authorList>
    </citation>
    <scope>NUCLEOTIDE SEQUENCE [LARGE SCALE MRNA] (ISOFORM ALPHA-1)</scope>
    <source>
        <strain>FVB/N</strain>
        <tissue>Mammary gland</tissue>
    </source>
</reference>
<reference key="7">
    <citation type="journal article" date="2007" name="Mol. Cell. Proteomics">
        <title>Lysine trimethylation of retinoic acid receptor-alpha: a novel means to regulate receptor function.</title>
        <authorList>
            <person name="Huq M.D."/>
            <person name="Tsai N.-P."/>
            <person name="Khan S.A."/>
            <person name="Wei L.-N."/>
        </authorList>
    </citation>
    <scope>PROTEIN SEQUENCE OF 340-359</scope>
    <scope>METHYLATION AT LYS-347</scope>
    <scope>FUNCTION</scope>
    <scope>INTERACTION WITH RXRA AND NCOR1</scope>
    <scope>IDENTIFICATION BY MASS SPECTROMETRY</scope>
    <scope>MUTAGENESIS OF LYS-347</scope>
</reference>
<reference key="8">
    <citation type="journal article" date="1997" name="Cell">
        <title>Stimulation of RAR alpha activation function AF-1 through binding to the general transcription factor TFIIH and phosphorylation by CDK7.</title>
        <authorList>
            <person name="Rochette-Egly C."/>
            <person name="Adam S."/>
            <person name="Rossignol M."/>
            <person name="Egly J.-M."/>
            <person name="Chambon P."/>
        </authorList>
    </citation>
    <scope>INTERACTION WITH CDK7 AND GTF2H3</scope>
    <scope>PHOSPHORYLATION AT SER-77</scope>
    <scope>FUNCTION</scope>
    <scope>MUTAGENESIS OF SER-74; SER-77; SER-449; SER-456 AND SER-461</scope>
</reference>
<reference key="9">
    <citation type="journal article" date="1997" name="Nature">
        <title>The transcriptional co-activator p/CIP binds CBP and mediates nuclear-receptor function.</title>
        <authorList>
            <person name="Torchia J."/>
            <person name="Rose D.W."/>
            <person name="Inostroza J."/>
            <person name="Kamei Y."/>
            <person name="Westin S."/>
            <person name="Glass C.K."/>
            <person name="Rosenfeld M.G."/>
        </authorList>
    </citation>
    <scope>INTERACTION WITH NCOA3</scope>
</reference>
<reference key="10">
    <citation type="journal article" date="2000" name="J. Biol. Chem.">
        <title>Follicle-stimulating hormone inhibits all-trans-retinoic acid-induced retinoic acid receptor alpha nuclear localization and transcriptional activation in mouse Sertoli cell lines.</title>
        <authorList>
            <person name="Braun K.W."/>
            <person name="Tribley W.A."/>
            <person name="Griswold M.D."/>
            <person name="Kim K.H."/>
        </authorList>
    </citation>
    <scope>FUNCTION</scope>
    <scope>SUBCELLULAR LOCATION</scope>
</reference>
<reference key="11">
    <citation type="journal article" date="2000" name="J. Biol. Chem.">
        <title>Isolation and characterization of peroxisome proliferator-activated receptor (PPAR) interacting protein (PRIP) as a coactivator for PPAR.</title>
        <authorList>
            <person name="Zhu Y.-J."/>
            <person name="Kan L."/>
            <person name="Qi C."/>
            <person name="Kanwar Y.S."/>
            <person name="Yeldandi A.V."/>
            <person name="Rao M.S."/>
            <person name="Reddy J.K."/>
        </authorList>
    </citation>
    <scope>INTERACTION WITH NCOA6</scope>
</reference>
<reference key="12">
    <citation type="journal article" date="2002" name="Biol. Reprod.">
        <title>Positive regulation of retinoic acid receptor alpha by protein kinase C and mitogen-activated protein kinase in sertoli cells.</title>
        <authorList>
            <person name="Braun K.W."/>
            <person name="Vo M.N."/>
            <person name="Kim K.H."/>
        </authorList>
    </citation>
    <scope>PHOSPHORYLATION</scope>
    <scope>SUBCELLULAR LOCATION</scope>
</reference>
<reference key="13">
    <citation type="journal article" date="2005" name="Differentiation">
        <title>Male sterility in mice lacking retinoic acid receptor alpha involves specific abnormalities in spermiogenesis.</title>
        <authorList>
            <person name="Chung S.S."/>
            <person name="Wang X."/>
            <person name="Wolgemuth D.J."/>
        </authorList>
    </citation>
    <scope>DISRUPTION PHENOTYPE</scope>
    <scope>FUNCTION</scope>
</reference>
<reference key="14">
    <citation type="journal article" date="2007" name="Ann. N. Y. Acad. Sci.">
        <title>Potential functions of retinoic acid receptor A in Sertoli cells and germ cells during spermatogenesis.</title>
        <authorList>
            <person name="Doyle T.J."/>
            <person name="Braun K.W."/>
            <person name="McLean D.J."/>
            <person name="Wright R.W."/>
            <person name="Griswold M.D."/>
            <person name="Kim K.H."/>
        </authorList>
    </citation>
    <scope>DISRUPTION PHENOTYPE</scope>
    <scope>FUNCTION</scope>
    <scope>TISSUE SPECIFICITY</scope>
    <scope>INDUCTION</scope>
</reference>
<reference key="15">
    <citation type="journal article" date="2009" name="Dev. Biol.">
        <title>Retinoic acid receptors are required for skeletal growth, matrix homeostasis and growth plate function in postnatal mouse.</title>
        <authorList>
            <person name="Williams J.A."/>
            <person name="Kondo N."/>
            <person name="Okabe T."/>
            <person name="Takeshita N."/>
            <person name="Pilchak D.M."/>
            <person name="Koyama E."/>
            <person name="Ochiai T."/>
            <person name="Jensen D."/>
            <person name="Chu M.L."/>
            <person name="Kane M.A."/>
            <person name="Napoli J.L."/>
            <person name="Enomoto-Iwamoto M."/>
            <person name="Ghyselinck N."/>
            <person name="Chambon P."/>
            <person name="Pacifici M."/>
            <person name="Iwamoto M."/>
        </authorList>
    </citation>
    <scope>DISRUPTION PHENOTYPE</scope>
    <scope>FUNCTION</scope>
</reference>
<reference key="16">
    <citation type="journal article" date="2009" name="EMBO J.">
        <title>A coordinated phosphorylation cascade initiated by p38MAPK/MSK1 directs RARalpha to target promoters.</title>
        <authorList>
            <person name="Bruck N."/>
            <person name="Vitoux D."/>
            <person name="Ferry C."/>
            <person name="Duong V."/>
            <person name="Bauer A."/>
            <person name="de The H."/>
            <person name="Rochette-Egly C."/>
        </authorList>
    </citation>
    <scope>PHOSPHORYLATION AT SER-77 AND SER-369</scope>
    <scope>FUNCTION</scope>
    <scope>INTERACTION WITH GTF2H3</scope>
    <scope>MUTAGENESIS OF SER-77 AND SER-369</scope>
</reference>
<reference key="17">
    <citation type="journal article" date="2010" name="BMC Mol. Biol.">
        <title>The transforming acidic coiled coil (TACC1) protein modulates the transcriptional activity of the nuclear receptors TR and RAR.</title>
        <authorList>
            <person name="Guyot R."/>
            <person name="Vincent S."/>
            <person name="Bertin J."/>
            <person name="Samarut J."/>
            <person name="Ravel-Chapuis P."/>
        </authorList>
    </citation>
    <scope>INTERACTION WITH TACC1</scope>
</reference>
<comment type="function">
    <text evidence="2 6 9 10 11 12 13 16">Receptor for retinoic acid (PubMed:17205979). Retinoic acid receptors bind as heterodimers to their target response elements in response to their ligands, all-trans or 9-cis retinoic acid, and regulate gene expression in various biological processes (PubMed:17205979). The RXR/RAR heterodimers bind to the retinoic acid response elements (RARE) composed of tandem 5'-AGGTCA-3' sites known as DR1-DR5 (PubMed:17205979). In the absence of ligand, the RXR-RAR heterodimers associate with a multiprotein complex containing transcription corepressors that induce histone deacetylation, chromatin condensation and transcriptional suppression (By similarity). On ligand binding, the corepressors dissociate from the receptors and associate with the coactivators leading to transcriptional activation (PubMed:17205979, PubMed:19078967, PubMed:9230306). Formation of heterocomplex with histone deacetylases might lead to inhibition of RARE DNA element binding and to transcriptional repression (By similarity). Transcriptional activation and RARE DNA element binding might be supported by the transcription factor KLF2 (By similarity). RARA plays an essential role in the regulation of retinoic acid-induced germ cell development during spermatogenesis (PubMed:15901285). Has a role in the survival of early spermatocytes at the beginning prophase of meiosis (PubMed:15901285, PubMed:17905941). In Sertoli cells, may promote the survival and development of early meiotic prophase spermatocytes (PubMed:10660575, PubMed:17905941). In concert with RARG, required for skeletal growth, matrix homeostasis and growth plate function (PubMed:19389355). Together with RXRA, positively regulates microRNA-10a expression, thereby inhibiting the GATA6/VCAM1 signaling response to pulsatile shear stress in vascular endothelial cells (By similarity). In association with HDAC3, HDAC5 and HDAC7 corepressors, plays a role in the repression of microRNA-10a and thereby promotes the inflammatory response (By similarity).</text>
</comment>
<comment type="subunit">
    <text evidence="2 7 10 12 14 15 16">Heterodimer; with RXRA (PubMed:17205979). Binds DNA preferentially as a heterodimer (By similarity). RXRA serves as enhancer to induce RARA binding to RARE (By similarity). Interacts with RXRG (By similarity). Interacts with NCOA3 and NCOA6 coactivators, leading to a strong increase of transcription of target genes (PubMed:10788465, PubMed:9192892). Interacts with NCOA7; the interaction requires ligand-binding (By similarity). Interacts (via the ligand-binding domain) with PRAME; interaction is direct and ligand (retinoic acid)-dependent (By similarity). Interacts with PRKAR1A; the interaction negatively regulates RARA transcriptional activity (By similarity). Interacts with NCOR1; the interaction occurs in the absence of ligand and represses transcriptional activity (PubMed:17205979). Interacts with NCOR2 (By similarity). Interacts with PRMT2 (By similarity). Interacts with LRIF1 (By similarity). Interacts with ASXL1 and NCOA1 (By similarity). Interacts with ACTN4 (By similarity). Interacts with CDK7; the interaction is enhanced by interaction with GTF2H3 (PubMed:9230306). Interacts with GTF2H3; the interaction requires prior phosphorylation on Ser-369 which then enhances interaction with CDK7 (PubMed:19078967). In a complex with HDAC3, HDAC5 and HDAC7; the HDACs serve as corepressors of RARA, causing its deacetylation and inhibition of RARE DNA element binding; association with HDAC3, HDAC5 and HDAC7 is increased upon oscillatory shear stress (By similarity). In the absence of hormonal ligand, interacts with TACC1 (PubMed:20078863).</text>
</comment>
<comment type="interaction">
    <interactant intactId="EBI-346736">
        <id>P11416</id>
    </interactant>
    <interactant intactId="EBI-8391218">
        <id>Q8C050</id>
        <label>Rps6ka5</label>
    </interactant>
    <organismsDiffer>false</organismsDiffer>
    <experiments>2</experiments>
</comment>
<comment type="interaction">
    <interactant intactId="EBI-346736">
        <id>P11416</id>
    </interactant>
    <interactant intactId="EBI-2007911">
        <id>Q16236</id>
        <label>NFE2L2</label>
    </interactant>
    <organismsDiffer>true</organismsDiffer>
    <experiments>2</experiments>
</comment>
<comment type="subcellular location">
    <subcellularLocation>
        <location evidence="6 8">Nucleus</location>
    </subcellularLocation>
    <subcellularLocation>
        <location evidence="6 8">Cytoplasm</location>
    </subcellularLocation>
    <text evidence="2 6 8">Nuclear localization depends on ligand binding, phosphorylation and sumoylation (PubMed:10660575, PubMed:12079996). Translocation to the nucleus is dependent on activation of PKC and the downstream MAPK phosphorylation (PubMed:10660575, PubMed:12079996). Increased nuclear localization upon pulsatile shear stress (By similarity).</text>
</comment>
<comment type="alternative products">
    <event type="alternative splicing"/>
    <isoform>
        <id>P11416-1</id>
        <name>Alpha-1</name>
        <sequence type="displayed"/>
    </isoform>
    <isoform>
        <id>P11416-2</id>
        <name>Alpha-2</name>
        <sequence type="described" ref="VSP_003630"/>
    </isoform>
</comment>
<comment type="tissue specificity">
    <text evidence="11">Expressed in Sertoli cells and germ cells.</text>
</comment>
<comment type="induction">
    <text evidence="11">By retinoic acid.</text>
</comment>
<comment type="domain">
    <text>Composed of three domains: a modulating N-terminal domain, a DNA-binding domain and a C-terminal ligand-binding domain.</text>
</comment>
<comment type="domain">
    <text evidence="2">The 9aaTAD motif is a transactivation domain present in a large number of yeast and animal transcription factors.</text>
</comment>
<comment type="PTM">
    <text evidence="8 12 16">Phosphorylated on serine and threonine residues. Phosphorylation does not change during cell cycle. Phosphorylation on Ser-77 is crucial for the N-terminal AF1 transcriptional activity. Under stress conditions, MAPK8 enhances phosphorylation on Thr-181, Ser-445 and Ser-461 leading to RARA ubiquitination and degradation. Phosphorylation by AKT1 inhibits the transactivation activity. On retinoic acid stimulation, phosphorylation on Ser-369 by RPS6KA5 promotes interaction with GTF2H3 and the CDK7-mediated phosphorylation of Ser-77.</text>
</comment>
<comment type="PTM">
    <text evidence="2">Ubiquitinated by UBR5, leading to its degradation: UBR5 specifically recognizes and binds ligand-bound RARA when it is not associated with coactivators (NCOAs). In presence of NCOAs, the UBR5-degron is not accessible, preventing its ubiquitination and degradation.</text>
</comment>
<comment type="PTM">
    <text evidence="1">Sumoylated with SUMO2, mainly on Lys-399 which is also required for SENP6 binding. On all-trans retinoic acid (ATRA) binding, a conformational change may occur that allows sumoylation on two additional site, Lys-166 and Lys-171. Probably desumoylated by SENP6. Sumoylation levels determine nuclear localization and regulate ATRA-mediated transcriptional activity (By similarity).</text>
</comment>
<comment type="PTM">
    <text evidence="2">Acetylated; acetylation is increased upon pulsatile shear stress and decreased upon oscillatory shear stress.</text>
</comment>
<comment type="disruption phenotype">
    <text evidence="9 11 13">Seminiferous tubules of 6 month-old animals display varying degrees of testicular degeneration, with moderate to severe levels of germ-cell degeneration. Epithelial cells in the epididymis show general disorganization. Sperm count is reduced to about 1.7% of wild-type and sperm mobility reduced by half. Rara and Rarg, but not Rara and Rarb, double knockout mice exhibit growth retardation after 3 weeks. Defects are found in the growth plates with deficiency in cartilage. Growth retardation was noticable in limb sketal elements such as femurs. Early lethality and male sterility due to squamous metaplasia of the seminal vesicles and prostate are also observed.</text>
</comment>
<comment type="similarity">
    <text evidence="18">Belongs to the nuclear hormone receptor family. NR1 subfamily.</text>
</comment>
<feature type="chain" id="PRO_0000053462" description="Retinoic acid receptor alpha">
    <location>
        <begin position="1"/>
        <end position="462"/>
    </location>
</feature>
<feature type="domain" description="NR LBD" evidence="4">
    <location>
        <begin position="183"/>
        <end position="417"/>
    </location>
</feature>
<feature type="DNA-binding region" description="Nuclear receptor" evidence="3">
    <location>
        <begin position="88"/>
        <end position="153"/>
    </location>
</feature>
<feature type="zinc finger region" description="NR C4-type" evidence="3">
    <location>
        <begin position="88"/>
        <end position="108"/>
    </location>
</feature>
<feature type="zinc finger region" description="NR C4-type" evidence="3">
    <location>
        <begin position="124"/>
        <end position="148"/>
    </location>
</feature>
<feature type="region of interest" description="Modulating">
    <location>
        <begin position="1"/>
        <end position="87"/>
    </location>
</feature>
<feature type="region of interest" description="Disordered" evidence="5">
    <location>
        <begin position="52"/>
        <end position="77"/>
    </location>
</feature>
<feature type="region of interest" description="Hinge">
    <location>
        <begin position="154"/>
        <end position="182"/>
    </location>
</feature>
<feature type="region of interest" description="Required for binding corepressor NCOR1">
    <location>
        <begin position="404"/>
        <end position="419"/>
    </location>
</feature>
<feature type="region of interest" description="Disordered" evidence="5">
    <location>
        <begin position="420"/>
        <end position="462"/>
    </location>
</feature>
<feature type="short sequence motif" description="UBR5-degron" evidence="2">
    <location>
        <begin position="254"/>
        <end position="258"/>
    </location>
</feature>
<feature type="short sequence motif" description="9aaTAD" evidence="2">
    <location>
        <begin position="408"/>
        <end position="416"/>
    </location>
</feature>
<feature type="compositionally biased region" description="Polar residues" evidence="5">
    <location>
        <begin position="52"/>
        <end position="64"/>
    </location>
</feature>
<feature type="compositionally biased region" description="Gly residues" evidence="5">
    <location>
        <begin position="426"/>
        <end position="437"/>
    </location>
</feature>
<feature type="compositionally biased region" description="Low complexity" evidence="5">
    <location>
        <begin position="444"/>
        <end position="462"/>
    </location>
</feature>
<feature type="binding site" evidence="2">
    <location>
        <position position="235"/>
    </location>
    <ligand>
        <name>all-trans-retinoate</name>
        <dbReference type="ChEBI" id="CHEBI:35291"/>
    </ligand>
</feature>
<feature type="binding site" evidence="2">
    <location>
        <position position="287"/>
    </location>
    <ligand>
        <name>all-trans-retinoate</name>
        <dbReference type="ChEBI" id="CHEBI:35291"/>
    </ligand>
</feature>
<feature type="modified residue" description="Phosphoserine; by CDK7" evidence="12 16">
    <location>
        <position position="77"/>
    </location>
</feature>
<feature type="modified residue" description="Phosphoserine; by PKB/AKT1" evidence="2">
    <location>
        <position position="96"/>
    </location>
</feature>
<feature type="modified residue" description="Phosphoserine; by PKA" evidence="2">
    <location>
        <position position="219"/>
    </location>
</feature>
<feature type="modified residue" description="N6,N6,N6-trimethyllysine" evidence="10">
    <location>
        <position position="347"/>
    </location>
</feature>
<feature type="modified residue" description="Phosphoserine; by PKA and RPS6KA5" evidence="12">
    <location>
        <position position="369"/>
    </location>
</feature>
<feature type="cross-link" description="Glycyl lysine isopeptide (Lys-Gly) (interchain with G-Cter in SUMO)" evidence="1">
    <location>
        <position position="166"/>
    </location>
</feature>
<feature type="cross-link" description="Glycyl lysine isopeptide (Lys-Gly) (interchain with G-Cter in SUMO)" evidence="1">
    <location>
        <position position="171"/>
    </location>
</feature>
<feature type="cross-link" description="Glycyl lysine isopeptide (Lys-Gly) (interchain with G-Cter in SUMO)" evidence="1">
    <location>
        <position position="399"/>
    </location>
</feature>
<feature type="splice variant" id="VSP_003630" description="In isoform Alpha-2." evidence="17">
    <original>MASNSSSCPTPGGGHLNGYPVPPYAFFFPPMLGGLSPPGALTSLQHQLPVSGYSTPSPAT</original>
    <variation>MYESVEVGGLTPAPNPFLVVDFYNQNRACLLQEKGLPAPGPYSTPLRTPLWNGSNHS</variation>
    <location>
        <begin position="1"/>
        <end position="60"/>
    </location>
</feature>
<feature type="sequence variant" description="In embryonal carcinoma cell line RAC65.">
    <original>G</original>
    <variation>A</variation>
    <location>
        <position position="391"/>
    </location>
</feature>
<feature type="sequence variant" description="In embryonal carcinoma cell line RAC65.">
    <location>
        <begin position="392"/>
        <end position="462"/>
    </location>
</feature>
<feature type="mutagenesis site" description="No effect on phosphorylation, no effect on transcriptional activity." evidence="16">
    <original>S</original>
    <variation>A</variation>
    <location>
        <position position="74"/>
    </location>
</feature>
<feature type="mutagenesis site" description="Decreases phosphorylation and no effect on interaction with CDK7. Strongly reduces transcriptional activity." evidence="12 16">
    <original>S</original>
    <variation>A</variation>
    <location>
        <position position="77"/>
    </location>
</feature>
<feature type="mutagenesis site" description="Greatly reduced interaction with RXRA and NCOR1 and transcriptional activation." evidence="10">
    <original>K</original>
    <variation>A</variation>
    <variation>Q</variation>
    <location>
        <position position="347"/>
    </location>
</feature>
<feature type="mutagenesis site" description="Reduced methylation levels. Little effect on interaction with RXRA or NCOR1. Small loss in transcriptional activation." evidence="10">
    <original>K</original>
    <variation>F</variation>
    <location>
        <position position="347"/>
    </location>
</feature>
<feature type="mutagenesis site" description="Abolishes phosphorylation and prevents phosphorylation of S-77." evidence="12">
    <original>S</original>
    <variation>A</variation>
    <location>
        <position position="369"/>
    </location>
</feature>
<feature type="mutagenesis site" description="No change in phosphorylation levels and no effect on transcriptional activity." evidence="16">
    <original>S</original>
    <variation>A</variation>
    <location>
        <position position="449"/>
    </location>
</feature>
<feature type="mutagenesis site" description="No change in phosphorylation levels and no effect on transcriptional activity." evidence="16">
    <original>S</original>
    <variation>A</variation>
    <location>
        <position position="456"/>
    </location>
</feature>
<feature type="mutagenesis site" description="No change in phosphorylation levels and no effect on transcriptional activity." evidence="16">
    <original>S</original>
    <variation>A</variation>
    <location>
        <position position="461"/>
    </location>
</feature>
<feature type="sequence conflict" description="In Ref. 5; AAA40031." evidence="18" ref="5">
    <original>N</original>
    <variation>K</variation>
    <location>
        <position position="163"/>
    </location>
</feature>
<feature type="sequence conflict" description="In Ref. 5; AAA40031." evidence="18" ref="5">
    <original>T</original>
    <variation>S</variation>
    <location>
        <position position="179"/>
    </location>
</feature>
<feature type="sequence conflict" description="In Ref. 5; AAA40031." evidence="18" ref="5">
    <original>M</original>
    <variation>L</variation>
    <location>
        <position position="284"/>
    </location>
</feature>
<protein>
    <recommendedName>
        <fullName>Retinoic acid receptor alpha</fullName>
        <shortName>RAR-alpha</shortName>
    </recommendedName>
    <alternativeName>
        <fullName>Nuclear receptor subfamily 1 group B member 1</fullName>
    </alternativeName>
</protein>